<accession>P53302</accession>
<gene>
    <name type="ordered locus">YGR190C</name>
</gene>
<evidence type="ECO:0000305" key="1"/>
<evidence type="ECO:0000305" key="2">
    <source>
    </source>
</evidence>
<feature type="chain" id="PRO_0000202841" description="Putative uncharacterized protein YGR190C">
    <location>
        <begin position="1"/>
        <end position="121"/>
    </location>
</feature>
<reference key="1">
    <citation type="journal article" date="1997" name="Nature">
        <title>The nucleotide sequence of Saccharomyces cerevisiae chromosome VII.</title>
        <authorList>
            <person name="Tettelin H."/>
            <person name="Agostoni-Carbone M.L."/>
            <person name="Albermann K."/>
            <person name="Albers M."/>
            <person name="Arroyo J."/>
            <person name="Backes U."/>
            <person name="Barreiros T."/>
            <person name="Bertani I."/>
            <person name="Bjourson A.J."/>
            <person name="Brueckner M."/>
            <person name="Bruschi C.V."/>
            <person name="Carignani G."/>
            <person name="Castagnoli L."/>
            <person name="Cerdan E."/>
            <person name="Clemente M.L."/>
            <person name="Coblenz A."/>
            <person name="Coglievina M."/>
            <person name="Coissac E."/>
            <person name="Defoor E."/>
            <person name="Del Bino S."/>
            <person name="Delius H."/>
            <person name="Delneri D."/>
            <person name="de Wergifosse P."/>
            <person name="Dujon B."/>
            <person name="Durand P."/>
            <person name="Entian K.-D."/>
            <person name="Eraso P."/>
            <person name="Escribano V."/>
            <person name="Fabiani L."/>
            <person name="Fartmann B."/>
            <person name="Feroli F."/>
            <person name="Feuermann M."/>
            <person name="Frontali L."/>
            <person name="Garcia-Gonzalez M."/>
            <person name="Garcia-Saez M.I."/>
            <person name="Goffeau A."/>
            <person name="Guerreiro P."/>
            <person name="Hani J."/>
            <person name="Hansen M."/>
            <person name="Hebling U."/>
            <person name="Hernandez K."/>
            <person name="Heumann K."/>
            <person name="Hilger F."/>
            <person name="Hofmann B."/>
            <person name="Indge K.J."/>
            <person name="James C.M."/>
            <person name="Klima R."/>
            <person name="Koetter P."/>
            <person name="Kramer B."/>
            <person name="Kramer W."/>
            <person name="Lauquin G."/>
            <person name="Leuther H."/>
            <person name="Louis E.J."/>
            <person name="Maillier E."/>
            <person name="Marconi A."/>
            <person name="Martegani E."/>
            <person name="Mazon M.J."/>
            <person name="Mazzoni C."/>
            <person name="McReynolds A.D.K."/>
            <person name="Melchioretto P."/>
            <person name="Mewes H.-W."/>
            <person name="Minenkova O."/>
            <person name="Mueller-Auer S."/>
            <person name="Nawrocki A."/>
            <person name="Netter P."/>
            <person name="Neu R."/>
            <person name="Nombela C."/>
            <person name="Oliver S.G."/>
            <person name="Panzeri L."/>
            <person name="Paoluzi S."/>
            <person name="Plevani P."/>
            <person name="Portetelle D."/>
            <person name="Portillo F."/>
            <person name="Potier S."/>
            <person name="Purnelle B."/>
            <person name="Rieger M."/>
            <person name="Riles L."/>
            <person name="Rinaldi T."/>
            <person name="Robben J."/>
            <person name="Rodrigues-Pousada C."/>
            <person name="Rodriguez-Belmonte E."/>
            <person name="Rodriguez-Torres A.M."/>
            <person name="Rose M."/>
            <person name="Ruzzi M."/>
            <person name="Saliola M."/>
            <person name="Sanchez-Perez M."/>
            <person name="Schaefer B."/>
            <person name="Schaefer M."/>
            <person name="Scharfe M."/>
            <person name="Schmidheini T."/>
            <person name="Schreer A."/>
            <person name="Skala J."/>
            <person name="Souciet J.-L."/>
            <person name="Steensma H.Y."/>
            <person name="Talla E."/>
            <person name="Thierry A."/>
            <person name="Vandenbol M."/>
            <person name="van der Aart Q.J.M."/>
            <person name="Van Dyck L."/>
            <person name="Vanoni M."/>
            <person name="Verhasselt P."/>
            <person name="Voet M."/>
            <person name="Volckaert G."/>
            <person name="Wambutt R."/>
            <person name="Watson M.D."/>
            <person name="Weber N."/>
            <person name="Wedler E."/>
            <person name="Wedler H."/>
            <person name="Wipfli P."/>
            <person name="Wolf K."/>
            <person name="Wright L.F."/>
            <person name="Zaccaria P."/>
            <person name="Zimmermann M."/>
            <person name="Zollner A."/>
            <person name="Kleine K."/>
        </authorList>
    </citation>
    <scope>NUCLEOTIDE SEQUENCE [LARGE SCALE GENOMIC DNA]</scope>
    <source>
        <strain>ATCC 204508 / S288c</strain>
    </source>
</reference>
<reference key="2">
    <citation type="journal article" date="2014" name="G3 (Bethesda)">
        <title>The reference genome sequence of Saccharomyces cerevisiae: Then and now.</title>
        <authorList>
            <person name="Engel S.R."/>
            <person name="Dietrich F.S."/>
            <person name="Fisk D.G."/>
            <person name="Binkley G."/>
            <person name="Balakrishnan R."/>
            <person name="Costanzo M.C."/>
            <person name="Dwight S.S."/>
            <person name="Hitz B.C."/>
            <person name="Karra K."/>
            <person name="Nash R.S."/>
            <person name="Weng S."/>
            <person name="Wong E.D."/>
            <person name="Lloyd P."/>
            <person name="Skrzypek M.S."/>
            <person name="Miyasato S.R."/>
            <person name="Simison M."/>
            <person name="Cherry J.M."/>
        </authorList>
    </citation>
    <scope>GENOME REANNOTATION</scope>
    <source>
        <strain>ATCC 204508 / S288c</strain>
    </source>
</reference>
<dbReference type="EMBL" id="Z72975">
    <property type="protein sequence ID" value="CAA97216.1"/>
    <property type="molecule type" value="Genomic_DNA"/>
</dbReference>
<dbReference type="PIR" id="S64508">
    <property type="entry name" value="S64508"/>
</dbReference>
<dbReference type="STRING" id="4932.YGR190C"/>
<dbReference type="PaxDb" id="4932-YGR190C"/>
<dbReference type="EnsemblFungi" id="YGR190C_mRNA">
    <property type="protein sequence ID" value="YGR190C"/>
    <property type="gene ID" value="YGR190C"/>
</dbReference>
<dbReference type="AGR" id="SGD:S000003422"/>
<dbReference type="SGD" id="S000003422">
    <property type="gene designation" value="YGR190C"/>
</dbReference>
<dbReference type="HOGENOM" id="CLU_2039893_0_0_1"/>
<comment type="miscellaneous">
    <text evidence="1">Partially overlaps HIP1.</text>
</comment>
<comment type="caution">
    <text evidence="2">Product of a dubious gene prediction unlikely to encode a functional protein. Because of that it is not part of the S.cerevisiae S288c complete/reference proteome set.</text>
</comment>
<proteinExistence type="uncertain"/>
<organism>
    <name type="scientific">Saccharomyces cerevisiae (strain ATCC 204508 / S288c)</name>
    <name type="common">Baker's yeast</name>
    <dbReference type="NCBI Taxonomy" id="559292"/>
    <lineage>
        <taxon>Eukaryota</taxon>
        <taxon>Fungi</taxon>
        <taxon>Dikarya</taxon>
        <taxon>Ascomycota</taxon>
        <taxon>Saccharomycotina</taxon>
        <taxon>Saccharomycetes</taxon>
        <taxon>Saccharomycetales</taxon>
        <taxon>Saccharomycetaceae</taxon>
        <taxon>Saccharomyces</taxon>
    </lineage>
</organism>
<protein>
    <recommendedName>
        <fullName>Putative uncharacterized protein YGR190C</fullName>
    </recommendedName>
</protein>
<sequence length="121" mass="13396">MSSCSVSSLRRKRSEEVISFVVWFMPGESLLLNGNAESVLEVSSVTNVVDSFSFSKAGEVAGLNPSTTSAQYSFFNGFLGIFDFEVVYLYLCTNESDSDNIIRQKNLGRTMNCNNADDMLF</sequence>
<name>YG47_YEAST</name>